<comment type="function">
    <text evidence="1">Catalyzes the transfer of the diacylglyceryl group from phosphatidylglycerol to the sulfhydryl group of the N-terminal cysteine of a prolipoprotein, the first step in the formation of mature lipoproteins.</text>
</comment>
<comment type="catalytic activity">
    <reaction evidence="1">
        <text>L-cysteinyl-[prolipoprotein] + a 1,2-diacyl-sn-glycero-3-phospho-(1'-sn-glycerol) = an S-1,2-diacyl-sn-glyceryl-L-cysteinyl-[prolipoprotein] + sn-glycerol 1-phosphate + H(+)</text>
        <dbReference type="Rhea" id="RHEA:56712"/>
        <dbReference type="Rhea" id="RHEA-COMP:14679"/>
        <dbReference type="Rhea" id="RHEA-COMP:14680"/>
        <dbReference type="ChEBI" id="CHEBI:15378"/>
        <dbReference type="ChEBI" id="CHEBI:29950"/>
        <dbReference type="ChEBI" id="CHEBI:57685"/>
        <dbReference type="ChEBI" id="CHEBI:64716"/>
        <dbReference type="ChEBI" id="CHEBI:140658"/>
        <dbReference type="EC" id="2.5.1.145"/>
    </reaction>
</comment>
<comment type="pathway">
    <text evidence="1">Protein modification; lipoprotein biosynthesis (diacylglyceryl transfer).</text>
</comment>
<comment type="subcellular location">
    <subcellularLocation>
        <location evidence="1">Cell membrane</location>
        <topology evidence="1">Multi-pass membrane protein</topology>
    </subcellularLocation>
</comment>
<comment type="similarity">
    <text evidence="1">Belongs to the Lgt family.</text>
</comment>
<evidence type="ECO:0000255" key="1">
    <source>
        <dbReference type="HAMAP-Rule" id="MF_01147"/>
    </source>
</evidence>
<keyword id="KW-1003">Cell membrane</keyword>
<keyword id="KW-0472">Membrane</keyword>
<keyword id="KW-0808">Transferase</keyword>
<keyword id="KW-0812">Transmembrane</keyword>
<keyword id="KW-1133">Transmembrane helix</keyword>
<reference key="1">
    <citation type="submission" date="2008-10" db="EMBL/GenBank/DDBJ databases">
        <title>Genome sequence of Bacillus cereus B4264.</title>
        <authorList>
            <person name="Dodson R.J."/>
            <person name="Durkin A.S."/>
            <person name="Rosovitz M.J."/>
            <person name="Rasko D.A."/>
            <person name="Hoffmaster A."/>
            <person name="Ravel J."/>
            <person name="Sutton G."/>
        </authorList>
    </citation>
    <scope>NUCLEOTIDE SEQUENCE [LARGE SCALE GENOMIC DNA]</scope>
    <source>
        <strain>B4264</strain>
    </source>
</reference>
<proteinExistence type="inferred from homology"/>
<protein>
    <recommendedName>
        <fullName evidence="1">Phosphatidylglycerol--prolipoprotein diacylglyceryl transferase</fullName>
        <ecNumber evidence="1">2.5.1.145</ecNumber>
    </recommendedName>
</protein>
<dbReference type="EC" id="2.5.1.145" evidence="1"/>
<dbReference type="EMBL" id="CP001176">
    <property type="protein sequence ID" value="ACK61860.1"/>
    <property type="molecule type" value="Genomic_DNA"/>
</dbReference>
<dbReference type="RefSeq" id="WP_000922850.1">
    <property type="nucleotide sequence ID" value="NC_011725.1"/>
</dbReference>
<dbReference type="SMR" id="B7HEG3"/>
<dbReference type="KEGG" id="bcb:BCB4264_A5281"/>
<dbReference type="HOGENOM" id="CLU_013386_0_1_9"/>
<dbReference type="UniPathway" id="UPA00664"/>
<dbReference type="Proteomes" id="UP000007096">
    <property type="component" value="Chromosome"/>
</dbReference>
<dbReference type="GO" id="GO:0005886">
    <property type="term" value="C:plasma membrane"/>
    <property type="evidence" value="ECO:0007669"/>
    <property type="project" value="UniProtKB-SubCell"/>
</dbReference>
<dbReference type="GO" id="GO:0008961">
    <property type="term" value="F:phosphatidylglycerol-prolipoprotein diacylglyceryl transferase activity"/>
    <property type="evidence" value="ECO:0007669"/>
    <property type="project" value="UniProtKB-UniRule"/>
</dbReference>
<dbReference type="GO" id="GO:0042158">
    <property type="term" value="P:lipoprotein biosynthetic process"/>
    <property type="evidence" value="ECO:0007669"/>
    <property type="project" value="UniProtKB-UniRule"/>
</dbReference>
<dbReference type="HAMAP" id="MF_01147">
    <property type="entry name" value="Lgt"/>
    <property type="match status" value="1"/>
</dbReference>
<dbReference type="InterPro" id="IPR001640">
    <property type="entry name" value="Lgt"/>
</dbReference>
<dbReference type="NCBIfam" id="TIGR00544">
    <property type="entry name" value="lgt"/>
    <property type="match status" value="1"/>
</dbReference>
<dbReference type="PANTHER" id="PTHR30589:SF0">
    <property type="entry name" value="PHOSPHATIDYLGLYCEROL--PROLIPOPROTEIN DIACYLGLYCERYL TRANSFERASE"/>
    <property type="match status" value="1"/>
</dbReference>
<dbReference type="PANTHER" id="PTHR30589">
    <property type="entry name" value="PROLIPOPROTEIN DIACYLGLYCERYL TRANSFERASE"/>
    <property type="match status" value="1"/>
</dbReference>
<dbReference type="Pfam" id="PF01790">
    <property type="entry name" value="LGT"/>
    <property type="match status" value="1"/>
</dbReference>
<dbReference type="PROSITE" id="PS01311">
    <property type="entry name" value="LGT"/>
    <property type="match status" value="1"/>
</dbReference>
<organism>
    <name type="scientific">Bacillus cereus (strain B4264)</name>
    <dbReference type="NCBI Taxonomy" id="405532"/>
    <lineage>
        <taxon>Bacteria</taxon>
        <taxon>Bacillati</taxon>
        <taxon>Bacillota</taxon>
        <taxon>Bacilli</taxon>
        <taxon>Bacillales</taxon>
        <taxon>Bacillaceae</taxon>
        <taxon>Bacillus</taxon>
        <taxon>Bacillus cereus group</taxon>
    </lineage>
</organism>
<gene>
    <name evidence="1" type="primary">lgt</name>
    <name type="ordered locus">BCB4264_A5281</name>
</gene>
<feature type="chain" id="PRO_1000137398" description="Phosphatidylglycerol--prolipoprotein diacylglyceryl transferase">
    <location>
        <begin position="1"/>
        <end position="270"/>
    </location>
</feature>
<feature type="transmembrane region" description="Helical" evidence="1">
    <location>
        <begin position="19"/>
        <end position="39"/>
    </location>
</feature>
<feature type="transmembrane region" description="Helical" evidence="1">
    <location>
        <begin position="56"/>
        <end position="76"/>
    </location>
</feature>
<feature type="transmembrane region" description="Helical" evidence="1">
    <location>
        <begin position="92"/>
        <end position="112"/>
    </location>
</feature>
<feature type="transmembrane region" description="Helical" evidence="1">
    <location>
        <begin position="116"/>
        <end position="136"/>
    </location>
</feature>
<feature type="transmembrane region" description="Helical" evidence="1">
    <location>
        <begin position="178"/>
        <end position="198"/>
    </location>
</feature>
<feature type="transmembrane region" description="Helical" evidence="1">
    <location>
        <begin position="206"/>
        <end position="226"/>
    </location>
</feature>
<feature type="transmembrane region" description="Helical" evidence="1">
    <location>
        <begin position="236"/>
        <end position="256"/>
    </location>
</feature>
<feature type="binding site" evidence="1">
    <location>
        <position position="138"/>
    </location>
    <ligand>
        <name>a 1,2-diacyl-sn-glycero-3-phospho-(1'-sn-glycerol)</name>
        <dbReference type="ChEBI" id="CHEBI:64716"/>
    </ligand>
</feature>
<sequence>MLLASVPQLDRVAIQLGPFPVYWYGIIIGTGVLLGLWLATREGERLGIPKDTFVDLVLIAVPIAILFARMYYVIFEWEYYAQNPSQIINIRQGGLAIHGGLIGAVITGVLFAKRRGVSFWKLADIAAPSILLGQAIGRWGNFMNQEAHGDEVTRQFLEGLHLPDFIINQMYIEGVYYHPTFLYESLWNFAGVILLLALRKVNLRRGELFFTYLIWYSVGRFFVEGLRTDSLMLGPLRIAQVMSIGLVVISIIFIIVRRKMGQADKRYLEN</sequence>
<name>LGT_BACC4</name>
<accession>B7HEG3</accession>